<evidence type="ECO:0000255" key="1">
    <source>
        <dbReference type="HAMAP-Rule" id="MF_01365"/>
    </source>
</evidence>
<evidence type="ECO:0000305" key="2"/>
<name>RL6_PROMA</name>
<protein>
    <recommendedName>
        <fullName evidence="1">Large ribosomal subunit protein uL6</fullName>
    </recommendedName>
    <alternativeName>
        <fullName evidence="2">50S ribosomal protein L6</fullName>
    </alternativeName>
</protein>
<reference key="1">
    <citation type="journal article" date="2003" name="Proc. Natl. Acad. Sci. U.S.A.">
        <title>Genome sequence of the cyanobacterium Prochlorococcus marinus SS120, a nearly minimal oxyphototrophic genome.</title>
        <authorList>
            <person name="Dufresne A."/>
            <person name="Salanoubat M."/>
            <person name="Partensky F."/>
            <person name="Artiguenave F."/>
            <person name="Axmann I.M."/>
            <person name="Barbe V."/>
            <person name="Duprat S."/>
            <person name="Galperin M.Y."/>
            <person name="Koonin E.V."/>
            <person name="Le Gall F."/>
            <person name="Makarova K.S."/>
            <person name="Ostrowski M."/>
            <person name="Oztas S."/>
            <person name="Robert C."/>
            <person name="Rogozin I.B."/>
            <person name="Scanlan D.J."/>
            <person name="Tandeau de Marsac N."/>
            <person name="Weissenbach J."/>
            <person name="Wincker P."/>
            <person name="Wolf Y.I."/>
            <person name="Hess W.R."/>
        </authorList>
    </citation>
    <scope>NUCLEOTIDE SEQUENCE [LARGE SCALE GENOMIC DNA]</scope>
    <source>
        <strain>SARG / CCMP1375 / SS120</strain>
    </source>
</reference>
<gene>
    <name evidence="1" type="primary">rplF</name>
    <name evidence="1" type="synonym">rpl6</name>
    <name type="ordered locus">Pro_1698</name>
</gene>
<keyword id="KW-1185">Reference proteome</keyword>
<keyword id="KW-0687">Ribonucleoprotein</keyword>
<keyword id="KW-0689">Ribosomal protein</keyword>
<keyword id="KW-0694">RNA-binding</keyword>
<keyword id="KW-0699">rRNA-binding</keyword>
<proteinExistence type="inferred from homology"/>
<dbReference type="EMBL" id="AE017126">
    <property type="protein sequence ID" value="AAQ00742.1"/>
    <property type="molecule type" value="Genomic_DNA"/>
</dbReference>
<dbReference type="RefSeq" id="NP_876089.1">
    <property type="nucleotide sequence ID" value="NC_005042.1"/>
</dbReference>
<dbReference type="RefSeq" id="WP_011125847.1">
    <property type="nucleotide sequence ID" value="NC_005042.1"/>
</dbReference>
<dbReference type="SMR" id="Q7V9X6"/>
<dbReference type="STRING" id="167539.Pro_1698"/>
<dbReference type="EnsemblBacteria" id="AAQ00742">
    <property type="protein sequence ID" value="AAQ00742"/>
    <property type="gene ID" value="Pro_1698"/>
</dbReference>
<dbReference type="KEGG" id="pma:Pro_1698"/>
<dbReference type="PATRIC" id="fig|167539.5.peg.1793"/>
<dbReference type="eggNOG" id="COG0097">
    <property type="taxonomic scope" value="Bacteria"/>
</dbReference>
<dbReference type="HOGENOM" id="CLU_065464_1_2_3"/>
<dbReference type="OrthoDB" id="9805007at2"/>
<dbReference type="Proteomes" id="UP000001420">
    <property type="component" value="Chromosome"/>
</dbReference>
<dbReference type="GO" id="GO:0022625">
    <property type="term" value="C:cytosolic large ribosomal subunit"/>
    <property type="evidence" value="ECO:0007669"/>
    <property type="project" value="TreeGrafter"/>
</dbReference>
<dbReference type="GO" id="GO:0019843">
    <property type="term" value="F:rRNA binding"/>
    <property type="evidence" value="ECO:0007669"/>
    <property type="project" value="UniProtKB-UniRule"/>
</dbReference>
<dbReference type="GO" id="GO:0003735">
    <property type="term" value="F:structural constituent of ribosome"/>
    <property type="evidence" value="ECO:0007669"/>
    <property type="project" value="InterPro"/>
</dbReference>
<dbReference type="GO" id="GO:0002181">
    <property type="term" value="P:cytoplasmic translation"/>
    <property type="evidence" value="ECO:0007669"/>
    <property type="project" value="TreeGrafter"/>
</dbReference>
<dbReference type="FunFam" id="3.90.930.12:FF:000001">
    <property type="entry name" value="50S ribosomal protein L6"/>
    <property type="match status" value="1"/>
</dbReference>
<dbReference type="FunFam" id="3.90.930.12:FF:000002">
    <property type="entry name" value="50S ribosomal protein L6"/>
    <property type="match status" value="1"/>
</dbReference>
<dbReference type="Gene3D" id="3.90.930.12">
    <property type="entry name" value="Ribosomal protein L6, alpha-beta domain"/>
    <property type="match status" value="2"/>
</dbReference>
<dbReference type="HAMAP" id="MF_01365_B">
    <property type="entry name" value="Ribosomal_uL6_B"/>
    <property type="match status" value="1"/>
</dbReference>
<dbReference type="InterPro" id="IPR000702">
    <property type="entry name" value="Ribosomal_uL6-like"/>
</dbReference>
<dbReference type="InterPro" id="IPR036789">
    <property type="entry name" value="Ribosomal_uL6-like_a/b-dom_sf"/>
</dbReference>
<dbReference type="InterPro" id="IPR020040">
    <property type="entry name" value="Ribosomal_uL6_a/b-dom"/>
</dbReference>
<dbReference type="InterPro" id="IPR019906">
    <property type="entry name" value="Ribosomal_uL6_bac-type"/>
</dbReference>
<dbReference type="InterPro" id="IPR002358">
    <property type="entry name" value="Ribosomal_uL6_CS"/>
</dbReference>
<dbReference type="NCBIfam" id="TIGR03654">
    <property type="entry name" value="L6_bact"/>
    <property type="match status" value="1"/>
</dbReference>
<dbReference type="PANTHER" id="PTHR11655">
    <property type="entry name" value="60S/50S RIBOSOMAL PROTEIN L6/L9"/>
    <property type="match status" value="1"/>
</dbReference>
<dbReference type="PANTHER" id="PTHR11655:SF14">
    <property type="entry name" value="LARGE RIBOSOMAL SUBUNIT PROTEIN UL6M"/>
    <property type="match status" value="1"/>
</dbReference>
<dbReference type="Pfam" id="PF00347">
    <property type="entry name" value="Ribosomal_L6"/>
    <property type="match status" value="2"/>
</dbReference>
<dbReference type="PIRSF" id="PIRSF002162">
    <property type="entry name" value="Ribosomal_L6"/>
    <property type="match status" value="1"/>
</dbReference>
<dbReference type="PRINTS" id="PR00059">
    <property type="entry name" value="RIBOSOMALL6"/>
</dbReference>
<dbReference type="SUPFAM" id="SSF56053">
    <property type="entry name" value="Ribosomal protein L6"/>
    <property type="match status" value="2"/>
</dbReference>
<dbReference type="PROSITE" id="PS00525">
    <property type="entry name" value="RIBOSOMAL_L6_1"/>
    <property type="match status" value="1"/>
</dbReference>
<feature type="chain" id="PRO_0000260911" description="Large ribosomal subunit protein uL6">
    <location>
        <begin position="1"/>
        <end position="179"/>
    </location>
</feature>
<organism>
    <name type="scientific">Prochlorococcus marinus (strain SARG / CCMP1375 / SS120)</name>
    <dbReference type="NCBI Taxonomy" id="167539"/>
    <lineage>
        <taxon>Bacteria</taxon>
        <taxon>Bacillati</taxon>
        <taxon>Cyanobacteriota</taxon>
        <taxon>Cyanophyceae</taxon>
        <taxon>Synechococcales</taxon>
        <taxon>Prochlorococcaceae</taxon>
        <taxon>Prochlorococcus</taxon>
    </lineage>
</organism>
<comment type="function">
    <text evidence="1">This protein binds to the 23S rRNA, and is important in its secondary structure. It is located near the subunit interface in the base of the L7/L12 stalk, and near the tRNA binding site of the peptidyltransferase center.</text>
</comment>
<comment type="subunit">
    <text evidence="1">Part of the 50S ribosomal subunit.</text>
</comment>
<comment type="similarity">
    <text evidence="1">Belongs to the universal ribosomal protein uL6 family.</text>
</comment>
<sequence>MSRIGKKPIPVPEKVAVTLDGLLVTVKGPKGELTRTLPEGVTIDQTDGLIIVSADSEKRKSRERHGLSRTLVANMIEGVNNGYSKQLEIVGVGSRAQVKGKTLVVSAGYSHPVEVIPPEGITFKVENNTNVLVSGIDKELVGNEAAKIRAIRPPEPYKGKGIKYLGERILRKAGKSGKK</sequence>
<accession>Q7V9X6</accession>